<reference key="1">
    <citation type="journal article" date="1988" name="EMBO J.">
        <title>The mouse protein synthesis initiation factor 4A gene family includes two related functional genes which are differentially expressed.</title>
        <authorList>
            <person name="Nielsen P.J."/>
            <person name="Trachsel H."/>
        </authorList>
    </citation>
    <scope>NUCLEOTIDE SEQUENCE (ISOFORMS 1 AND 2)</scope>
</reference>
<reference key="2">
    <citation type="submission" date="1992-10" db="EMBL/GenBank/DDBJ databases">
        <authorList>
            <person name="Nielsen P.J."/>
        </authorList>
    </citation>
    <scope>NUCLEOTIDE SEQUENCE (ISOFORM 1)</scope>
    <source>
        <strain>C57BL/6J</strain>
        <tissue>Liver</tissue>
    </source>
</reference>
<reference key="3">
    <citation type="journal article" date="2005" name="Science">
        <title>The transcriptional landscape of the mammalian genome.</title>
        <authorList>
            <person name="Carninci P."/>
            <person name="Kasukawa T."/>
            <person name="Katayama S."/>
            <person name="Gough J."/>
            <person name="Frith M.C."/>
            <person name="Maeda N."/>
            <person name="Oyama R."/>
            <person name="Ravasi T."/>
            <person name="Lenhard B."/>
            <person name="Wells C."/>
            <person name="Kodzius R."/>
            <person name="Shimokawa K."/>
            <person name="Bajic V.B."/>
            <person name="Brenner S.E."/>
            <person name="Batalov S."/>
            <person name="Forrest A.R."/>
            <person name="Zavolan M."/>
            <person name="Davis M.J."/>
            <person name="Wilming L.G."/>
            <person name="Aidinis V."/>
            <person name="Allen J.E."/>
            <person name="Ambesi-Impiombato A."/>
            <person name="Apweiler R."/>
            <person name="Aturaliya R.N."/>
            <person name="Bailey T.L."/>
            <person name="Bansal M."/>
            <person name="Baxter L."/>
            <person name="Beisel K.W."/>
            <person name="Bersano T."/>
            <person name="Bono H."/>
            <person name="Chalk A.M."/>
            <person name="Chiu K.P."/>
            <person name="Choudhary V."/>
            <person name="Christoffels A."/>
            <person name="Clutterbuck D.R."/>
            <person name="Crowe M.L."/>
            <person name="Dalla E."/>
            <person name="Dalrymple B.P."/>
            <person name="de Bono B."/>
            <person name="Della Gatta G."/>
            <person name="di Bernardo D."/>
            <person name="Down T."/>
            <person name="Engstrom P."/>
            <person name="Fagiolini M."/>
            <person name="Faulkner G."/>
            <person name="Fletcher C.F."/>
            <person name="Fukushima T."/>
            <person name="Furuno M."/>
            <person name="Futaki S."/>
            <person name="Gariboldi M."/>
            <person name="Georgii-Hemming P."/>
            <person name="Gingeras T.R."/>
            <person name="Gojobori T."/>
            <person name="Green R.E."/>
            <person name="Gustincich S."/>
            <person name="Harbers M."/>
            <person name="Hayashi Y."/>
            <person name="Hensch T.K."/>
            <person name="Hirokawa N."/>
            <person name="Hill D."/>
            <person name="Huminiecki L."/>
            <person name="Iacono M."/>
            <person name="Ikeo K."/>
            <person name="Iwama A."/>
            <person name="Ishikawa T."/>
            <person name="Jakt M."/>
            <person name="Kanapin A."/>
            <person name="Katoh M."/>
            <person name="Kawasawa Y."/>
            <person name="Kelso J."/>
            <person name="Kitamura H."/>
            <person name="Kitano H."/>
            <person name="Kollias G."/>
            <person name="Krishnan S.P."/>
            <person name="Kruger A."/>
            <person name="Kummerfeld S.K."/>
            <person name="Kurochkin I.V."/>
            <person name="Lareau L.F."/>
            <person name="Lazarevic D."/>
            <person name="Lipovich L."/>
            <person name="Liu J."/>
            <person name="Liuni S."/>
            <person name="McWilliam S."/>
            <person name="Madan Babu M."/>
            <person name="Madera M."/>
            <person name="Marchionni L."/>
            <person name="Matsuda H."/>
            <person name="Matsuzawa S."/>
            <person name="Miki H."/>
            <person name="Mignone F."/>
            <person name="Miyake S."/>
            <person name="Morris K."/>
            <person name="Mottagui-Tabar S."/>
            <person name="Mulder N."/>
            <person name="Nakano N."/>
            <person name="Nakauchi H."/>
            <person name="Ng P."/>
            <person name="Nilsson R."/>
            <person name="Nishiguchi S."/>
            <person name="Nishikawa S."/>
            <person name="Nori F."/>
            <person name="Ohara O."/>
            <person name="Okazaki Y."/>
            <person name="Orlando V."/>
            <person name="Pang K.C."/>
            <person name="Pavan W.J."/>
            <person name="Pavesi G."/>
            <person name="Pesole G."/>
            <person name="Petrovsky N."/>
            <person name="Piazza S."/>
            <person name="Reed J."/>
            <person name="Reid J.F."/>
            <person name="Ring B.Z."/>
            <person name="Ringwald M."/>
            <person name="Rost B."/>
            <person name="Ruan Y."/>
            <person name="Salzberg S.L."/>
            <person name="Sandelin A."/>
            <person name="Schneider C."/>
            <person name="Schoenbach C."/>
            <person name="Sekiguchi K."/>
            <person name="Semple C.A."/>
            <person name="Seno S."/>
            <person name="Sessa L."/>
            <person name="Sheng Y."/>
            <person name="Shibata Y."/>
            <person name="Shimada H."/>
            <person name="Shimada K."/>
            <person name="Silva D."/>
            <person name="Sinclair B."/>
            <person name="Sperling S."/>
            <person name="Stupka E."/>
            <person name="Sugiura K."/>
            <person name="Sultana R."/>
            <person name="Takenaka Y."/>
            <person name="Taki K."/>
            <person name="Tammoja K."/>
            <person name="Tan S.L."/>
            <person name="Tang S."/>
            <person name="Taylor M.S."/>
            <person name="Tegner J."/>
            <person name="Teichmann S.A."/>
            <person name="Ueda H.R."/>
            <person name="van Nimwegen E."/>
            <person name="Verardo R."/>
            <person name="Wei C.L."/>
            <person name="Yagi K."/>
            <person name="Yamanishi H."/>
            <person name="Zabarovsky E."/>
            <person name="Zhu S."/>
            <person name="Zimmer A."/>
            <person name="Hide W."/>
            <person name="Bult C."/>
            <person name="Grimmond S.M."/>
            <person name="Teasdale R.D."/>
            <person name="Liu E.T."/>
            <person name="Brusic V."/>
            <person name="Quackenbush J."/>
            <person name="Wahlestedt C."/>
            <person name="Mattick J.S."/>
            <person name="Hume D.A."/>
            <person name="Kai C."/>
            <person name="Sasaki D."/>
            <person name="Tomaru Y."/>
            <person name="Fukuda S."/>
            <person name="Kanamori-Katayama M."/>
            <person name="Suzuki M."/>
            <person name="Aoki J."/>
            <person name="Arakawa T."/>
            <person name="Iida J."/>
            <person name="Imamura K."/>
            <person name="Itoh M."/>
            <person name="Kato T."/>
            <person name="Kawaji H."/>
            <person name="Kawagashira N."/>
            <person name="Kawashima T."/>
            <person name="Kojima M."/>
            <person name="Kondo S."/>
            <person name="Konno H."/>
            <person name="Nakano K."/>
            <person name="Ninomiya N."/>
            <person name="Nishio T."/>
            <person name="Okada M."/>
            <person name="Plessy C."/>
            <person name="Shibata K."/>
            <person name="Shiraki T."/>
            <person name="Suzuki S."/>
            <person name="Tagami M."/>
            <person name="Waki K."/>
            <person name="Watahiki A."/>
            <person name="Okamura-Oho Y."/>
            <person name="Suzuki H."/>
            <person name="Kawai J."/>
            <person name="Hayashizaki Y."/>
        </authorList>
    </citation>
    <scope>NUCLEOTIDE SEQUENCE [LARGE SCALE MRNA] (ISOFORM 1)</scope>
    <source>
        <strain>C57BL/6J</strain>
        <tissue>Head</tissue>
    </source>
</reference>
<reference key="4">
    <citation type="journal article" date="1997" name="Nucleic Acids Res.">
        <title>Intracellular localization and unique conserved sequences of three small nucleolar RNAs.</title>
        <authorList>
            <person name="Selvamurugan N."/>
            <person name="Joost O.H."/>
            <person name="Haas E.S."/>
            <person name="Brown J.W."/>
            <person name="Galvin N.J."/>
            <person name="Eliceiri G.L."/>
        </authorList>
    </citation>
    <scope>NUCLEOTIDE SEQUENCE OF 291-323</scope>
    <source>
        <tissue>Liver</tissue>
    </source>
</reference>
<reference key="5">
    <citation type="journal article" date="2010" name="Cell">
        <title>A tissue-specific atlas of mouse protein phosphorylation and expression.</title>
        <authorList>
            <person name="Huttlin E.L."/>
            <person name="Jedrychowski M.P."/>
            <person name="Elias J.E."/>
            <person name="Goswami T."/>
            <person name="Rad R."/>
            <person name="Beausoleil S.A."/>
            <person name="Villen J."/>
            <person name="Haas W."/>
            <person name="Sowa M.E."/>
            <person name="Gygi S.P."/>
        </authorList>
    </citation>
    <scope>IDENTIFICATION BY MASS SPECTROMETRY [LARGE SCALE ANALYSIS]</scope>
    <source>
        <tissue>Brain</tissue>
        <tissue>Brown adipose tissue</tissue>
        <tissue>Heart</tissue>
        <tissue>Kidney</tissue>
        <tissue>Liver</tissue>
        <tissue>Lung</tissue>
        <tissue>Pancreas</tissue>
        <tissue>Spleen</tissue>
        <tissue>Testis</tissue>
    </source>
</reference>
<evidence type="ECO:0000250" key="1"/>
<evidence type="ECO:0000250" key="2">
    <source>
        <dbReference type="UniProtKB" id="Q14240"/>
    </source>
</evidence>
<evidence type="ECO:0000255" key="3">
    <source>
        <dbReference type="PROSITE-ProRule" id="PRU00541"/>
    </source>
</evidence>
<evidence type="ECO:0000255" key="4">
    <source>
        <dbReference type="PROSITE-ProRule" id="PRU00542"/>
    </source>
</evidence>
<evidence type="ECO:0000256" key="5">
    <source>
        <dbReference type="SAM" id="MobiDB-lite"/>
    </source>
</evidence>
<evidence type="ECO:0000305" key="6"/>
<gene>
    <name type="primary">Eif4a2</name>
    <name type="synonym">Ddx2b</name>
</gene>
<organism>
    <name type="scientific">Mus musculus</name>
    <name type="common">Mouse</name>
    <dbReference type="NCBI Taxonomy" id="10090"/>
    <lineage>
        <taxon>Eukaryota</taxon>
        <taxon>Metazoa</taxon>
        <taxon>Chordata</taxon>
        <taxon>Craniata</taxon>
        <taxon>Vertebrata</taxon>
        <taxon>Euteleostomi</taxon>
        <taxon>Mammalia</taxon>
        <taxon>Eutheria</taxon>
        <taxon>Euarchontoglires</taxon>
        <taxon>Glires</taxon>
        <taxon>Rodentia</taxon>
        <taxon>Myomorpha</taxon>
        <taxon>Muroidea</taxon>
        <taxon>Muridae</taxon>
        <taxon>Murinae</taxon>
        <taxon>Mus</taxon>
        <taxon>Mus</taxon>
    </lineage>
</organism>
<protein>
    <recommendedName>
        <fullName>Eukaryotic initiation factor 4A-II</fullName>
        <shortName>eIF-4A-II</shortName>
        <shortName>eIF4A-II</shortName>
        <ecNumber>3.6.4.13</ecNumber>
    </recommendedName>
    <alternativeName>
        <fullName>ATP-dependent RNA helicase eIF4A-2</fullName>
    </alternativeName>
</protein>
<feature type="chain" id="PRO_0000054940" description="Eukaryotic initiation factor 4A-II">
    <location>
        <begin position="1"/>
        <end position="407"/>
    </location>
</feature>
<feature type="domain" description="Helicase ATP-binding" evidence="3">
    <location>
        <begin position="64"/>
        <end position="235"/>
    </location>
</feature>
<feature type="domain" description="Helicase C-terminal" evidence="4">
    <location>
        <begin position="246"/>
        <end position="407"/>
    </location>
</feature>
<feature type="region of interest" description="Disordered" evidence="5">
    <location>
        <begin position="1"/>
        <end position="22"/>
    </location>
</feature>
<feature type="short sequence motif" description="Q motif">
    <location>
        <begin position="33"/>
        <end position="61"/>
    </location>
</feature>
<feature type="short sequence motif" description="DEAD box">
    <location>
        <begin position="183"/>
        <end position="186"/>
    </location>
</feature>
<feature type="binding site" evidence="3">
    <location>
        <begin position="77"/>
        <end position="84"/>
    </location>
    <ligand>
        <name>ATP</name>
        <dbReference type="ChEBI" id="CHEBI:30616"/>
    </ligand>
</feature>
<feature type="modified residue" description="Phosphothreonine" evidence="2">
    <location>
        <position position="159"/>
    </location>
</feature>
<feature type="splice variant" id="VSP_009630" description="In isoform 2." evidence="6">
    <original>N</original>
    <variation>NS</variation>
    <location>
        <position position="9"/>
    </location>
</feature>
<feature type="sequence conflict" description="In Ref. 1; CAA31025." evidence="6" ref="1">
    <original>IF</original>
    <variation>RV</variation>
    <location>
        <begin position="200"/>
        <end position="201"/>
    </location>
</feature>
<feature type="sequence conflict" description="In Ref. 1; CAA31025." evidence="6" ref="1">
    <original>HARD</original>
    <variation>QAIY</variation>
    <location>
        <begin position="294"/>
        <end position="297"/>
    </location>
</feature>
<feature type="sequence conflict" description="In Ref. 1; CAA31025." evidence="6" ref="1">
    <original>D</original>
    <variation>H</variation>
    <location>
        <position position="387"/>
    </location>
</feature>
<feature type="sequence conflict" description="In Ref. 1; CAA31025." evidence="6" ref="1">
    <original>V</original>
    <variation>G</variation>
    <location>
        <position position="403"/>
    </location>
</feature>
<name>IF4A2_MOUSE</name>
<dbReference type="EC" id="3.6.4.13"/>
<dbReference type="EMBL" id="X12507">
    <property type="protein sequence ID" value="CAA31025.1"/>
    <property type="molecule type" value="mRNA"/>
</dbReference>
<dbReference type="EMBL" id="X14422">
    <property type="protein sequence ID" value="CAA32585.1"/>
    <property type="molecule type" value="Genomic_DNA"/>
</dbReference>
<dbReference type="EMBL" id="X56953">
    <property type="protein sequence ID" value="CAA40269.1"/>
    <property type="molecule type" value="Genomic_DNA"/>
</dbReference>
<dbReference type="EMBL" id="X56953">
    <property type="protein sequence ID" value="CAA40268.1"/>
    <property type="molecule type" value="Genomic_DNA"/>
</dbReference>
<dbReference type="EMBL" id="AK076509">
    <property type="protein sequence ID" value="BAC36372.1"/>
    <property type="molecule type" value="mRNA"/>
</dbReference>
<dbReference type="EMBL" id="U64706">
    <property type="protein sequence ID" value="AAC53180.1"/>
    <property type="molecule type" value="Genomic_DNA"/>
</dbReference>
<dbReference type="CCDS" id="CCDS28074.1">
    <molecule id="P10630-1"/>
</dbReference>
<dbReference type="CCDS" id="CCDS84218.1">
    <molecule id="P10630-2"/>
</dbReference>
<dbReference type="PIR" id="S00985">
    <property type="entry name" value="S00985"/>
</dbReference>
<dbReference type="RefSeq" id="NP_001116509.1">
    <property type="nucleotide sequence ID" value="NM_001123037.2"/>
</dbReference>
<dbReference type="RefSeq" id="NP_001116510.1">
    <property type="nucleotide sequence ID" value="NM_001123038.2"/>
</dbReference>
<dbReference type="RefSeq" id="NP_001334108.1">
    <molecule id="P10630-2"/>
    <property type="nucleotide sequence ID" value="NM_001347179.2"/>
</dbReference>
<dbReference type="RefSeq" id="NP_038534.2">
    <molecule id="P10630-1"/>
    <property type="nucleotide sequence ID" value="NM_013506.3"/>
</dbReference>
<dbReference type="SMR" id="P10630"/>
<dbReference type="BioGRID" id="199419">
    <property type="interactions" value="17"/>
</dbReference>
<dbReference type="ComplexPortal" id="CPX-5862">
    <property type="entry name" value="Eukaryotic translation initiation factor 4F, EIF4A2 and EIF4G1 variant"/>
</dbReference>
<dbReference type="ComplexPortal" id="CPX-5864">
    <property type="entry name" value="Eukaryotic translation initiation factor 4F, EIF4A2 and EIF4G3 variant"/>
</dbReference>
<dbReference type="FunCoup" id="P10630">
    <property type="interactions" value="3206"/>
</dbReference>
<dbReference type="IntAct" id="P10630">
    <property type="interactions" value="6"/>
</dbReference>
<dbReference type="STRING" id="10090.ENSMUSP00000110998"/>
<dbReference type="ChEMBL" id="CHEMBL3751650"/>
<dbReference type="GlyGen" id="P10630">
    <property type="glycosylation" value="1 site, 1 O-linked glycan (1 site)"/>
</dbReference>
<dbReference type="iPTMnet" id="P10630"/>
<dbReference type="PhosphoSitePlus" id="P10630"/>
<dbReference type="SwissPalm" id="P10630"/>
<dbReference type="jPOST" id="P10630"/>
<dbReference type="PaxDb" id="10090-ENSMUSP00000023599"/>
<dbReference type="PeptideAtlas" id="P10630"/>
<dbReference type="ProteomicsDB" id="267260">
    <molecule id="P10630-1"/>
</dbReference>
<dbReference type="ProteomicsDB" id="267261">
    <molecule id="P10630-2"/>
</dbReference>
<dbReference type="Pumba" id="P10630"/>
<dbReference type="Antibodypedia" id="3189">
    <property type="antibodies" value="307 antibodies from 33 providers"/>
</dbReference>
<dbReference type="DNASU" id="13682"/>
<dbReference type="Ensembl" id="ENSMUST00000023599.13">
    <molecule id="P10630-1"/>
    <property type="protein sequence ID" value="ENSMUSP00000023599.7"/>
    <property type="gene ID" value="ENSMUSG00000022884.17"/>
</dbReference>
<dbReference type="GeneID" id="13682"/>
<dbReference type="KEGG" id="mmu:13682"/>
<dbReference type="UCSC" id="uc007ytd.3">
    <molecule id="P10630-1"/>
    <property type="organism name" value="mouse"/>
</dbReference>
<dbReference type="AGR" id="MGI:106906"/>
<dbReference type="CTD" id="1974"/>
<dbReference type="MGI" id="MGI:106906">
    <property type="gene designation" value="Eif4a2"/>
</dbReference>
<dbReference type="VEuPathDB" id="HostDB:ENSMUSG00000022884"/>
<dbReference type="eggNOG" id="KOG0327">
    <property type="taxonomic scope" value="Eukaryota"/>
</dbReference>
<dbReference type="GeneTree" id="ENSGT00940000153783"/>
<dbReference type="HOGENOM" id="CLU_003041_1_0_1"/>
<dbReference type="InParanoid" id="P10630"/>
<dbReference type="OMA" id="FGCQALV"/>
<dbReference type="OrthoDB" id="10265785at2759"/>
<dbReference type="PhylomeDB" id="P10630"/>
<dbReference type="TreeFam" id="TF101524"/>
<dbReference type="Reactome" id="R-MMU-1169408">
    <property type="pathway name" value="ISG15 antiviral mechanism"/>
</dbReference>
<dbReference type="Reactome" id="R-MMU-156827">
    <property type="pathway name" value="L13a-mediated translational silencing of Ceruloplasmin expression"/>
</dbReference>
<dbReference type="Reactome" id="R-MMU-429947">
    <property type="pathway name" value="Deadenylation of mRNA"/>
</dbReference>
<dbReference type="Reactome" id="R-MMU-72649">
    <property type="pathway name" value="Translation initiation complex formation"/>
</dbReference>
<dbReference type="Reactome" id="R-MMU-72662">
    <property type="pathway name" value="Activation of the mRNA upon binding of the cap-binding complex and eIFs, and subsequent binding to 43S"/>
</dbReference>
<dbReference type="Reactome" id="R-MMU-72702">
    <property type="pathway name" value="Ribosomal scanning and start codon recognition"/>
</dbReference>
<dbReference type="Reactome" id="R-MMU-72706">
    <property type="pathway name" value="GTP hydrolysis and joining of the 60S ribosomal subunit"/>
</dbReference>
<dbReference type="BioGRID-ORCS" id="13682">
    <property type="hits" value="1 hit in 80 CRISPR screens"/>
</dbReference>
<dbReference type="ChiTaRS" id="Eif4a2">
    <property type="organism name" value="mouse"/>
</dbReference>
<dbReference type="PRO" id="PR:P10630"/>
<dbReference type="Proteomes" id="UP000000589">
    <property type="component" value="Chromosome 16"/>
</dbReference>
<dbReference type="RNAct" id="P10630">
    <property type="molecule type" value="protein"/>
</dbReference>
<dbReference type="Bgee" id="ENSMUSG00000022884">
    <property type="expression patterns" value="Expressed in dentate gyrus of hippocampal formation granule cell and 79 other cell types or tissues"/>
</dbReference>
<dbReference type="ExpressionAtlas" id="P10630">
    <property type="expression patterns" value="baseline and differential"/>
</dbReference>
<dbReference type="GO" id="GO:0016281">
    <property type="term" value="C:eukaryotic translation initiation factor 4F complex"/>
    <property type="evidence" value="ECO:0000303"/>
    <property type="project" value="ComplexPortal"/>
</dbReference>
<dbReference type="GO" id="GO:0048471">
    <property type="term" value="C:perinuclear region of cytoplasm"/>
    <property type="evidence" value="ECO:0007669"/>
    <property type="project" value="Ensembl"/>
</dbReference>
<dbReference type="GO" id="GO:0005524">
    <property type="term" value="F:ATP binding"/>
    <property type="evidence" value="ECO:0007669"/>
    <property type="project" value="UniProtKB-KW"/>
</dbReference>
<dbReference type="GO" id="GO:0016887">
    <property type="term" value="F:ATP hydrolysis activity"/>
    <property type="evidence" value="ECO:0007669"/>
    <property type="project" value="Ensembl"/>
</dbReference>
<dbReference type="GO" id="GO:0003723">
    <property type="term" value="F:RNA binding"/>
    <property type="evidence" value="ECO:0007669"/>
    <property type="project" value="UniProtKB-KW"/>
</dbReference>
<dbReference type="GO" id="GO:0003724">
    <property type="term" value="F:RNA helicase activity"/>
    <property type="evidence" value="ECO:0007669"/>
    <property type="project" value="UniProtKB-EC"/>
</dbReference>
<dbReference type="GO" id="GO:0003743">
    <property type="term" value="F:translation initiation factor activity"/>
    <property type="evidence" value="ECO:0007669"/>
    <property type="project" value="UniProtKB-KW"/>
</dbReference>
<dbReference type="GO" id="GO:1990830">
    <property type="term" value="P:cellular response to leukemia inhibitory factor"/>
    <property type="evidence" value="ECO:0000270"/>
    <property type="project" value="MGI"/>
</dbReference>
<dbReference type="GO" id="GO:0006413">
    <property type="term" value="P:translational initiation"/>
    <property type="evidence" value="ECO:0000303"/>
    <property type="project" value="ComplexPortal"/>
</dbReference>
<dbReference type="CDD" id="cd18046">
    <property type="entry name" value="DEADc_EIF4AII_EIF4AI_DDX2"/>
    <property type="match status" value="1"/>
</dbReference>
<dbReference type="CDD" id="cd18787">
    <property type="entry name" value="SF2_C_DEAD"/>
    <property type="match status" value="1"/>
</dbReference>
<dbReference type="FunFam" id="3.40.50.300:FF:000089">
    <property type="entry name" value="Eukaryotic initiation factor 4A-II"/>
    <property type="match status" value="1"/>
</dbReference>
<dbReference type="FunFam" id="3.40.50.300:FF:000031">
    <property type="entry name" value="Eukaryotic initiation factor 4A-III"/>
    <property type="match status" value="1"/>
</dbReference>
<dbReference type="Gene3D" id="3.40.50.300">
    <property type="entry name" value="P-loop containing nucleotide triphosphate hydrolases"/>
    <property type="match status" value="2"/>
</dbReference>
<dbReference type="InterPro" id="IPR011545">
    <property type="entry name" value="DEAD/DEAH_box_helicase_dom"/>
</dbReference>
<dbReference type="InterPro" id="IPR044728">
    <property type="entry name" value="EIF4A_DEADc"/>
</dbReference>
<dbReference type="InterPro" id="IPR014001">
    <property type="entry name" value="Helicase_ATP-bd"/>
</dbReference>
<dbReference type="InterPro" id="IPR001650">
    <property type="entry name" value="Helicase_C-like"/>
</dbReference>
<dbReference type="InterPro" id="IPR027417">
    <property type="entry name" value="P-loop_NTPase"/>
</dbReference>
<dbReference type="InterPro" id="IPR000629">
    <property type="entry name" value="RNA-helicase_DEAD-box_CS"/>
</dbReference>
<dbReference type="InterPro" id="IPR014014">
    <property type="entry name" value="RNA_helicase_DEAD_Q_motif"/>
</dbReference>
<dbReference type="PANTHER" id="PTHR47958">
    <property type="entry name" value="ATP-DEPENDENT RNA HELICASE DBP3"/>
    <property type="match status" value="1"/>
</dbReference>
<dbReference type="Pfam" id="PF00270">
    <property type="entry name" value="DEAD"/>
    <property type="match status" value="1"/>
</dbReference>
<dbReference type="Pfam" id="PF00271">
    <property type="entry name" value="Helicase_C"/>
    <property type="match status" value="1"/>
</dbReference>
<dbReference type="SMART" id="SM00487">
    <property type="entry name" value="DEXDc"/>
    <property type="match status" value="1"/>
</dbReference>
<dbReference type="SMART" id="SM00490">
    <property type="entry name" value="HELICc"/>
    <property type="match status" value="1"/>
</dbReference>
<dbReference type="SUPFAM" id="SSF52540">
    <property type="entry name" value="P-loop containing nucleoside triphosphate hydrolases"/>
    <property type="match status" value="1"/>
</dbReference>
<dbReference type="PROSITE" id="PS00039">
    <property type="entry name" value="DEAD_ATP_HELICASE"/>
    <property type="match status" value="1"/>
</dbReference>
<dbReference type="PROSITE" id="PS51192">
    <property type="entry name" value="HELICASE_ATP_BIND_1"/>
    <property type="match status" value="1"/>
</dbReference>
<dbReference type="PROSITE" id="PS51194">
    <property type="entry name" value="HELICASE_CTER"/>
    <property type="match status" value="1"/>
</dbReference>
<dbReference type="PROSITE" id="PS51195">
    <property type="entry name" value="Q_MOTIF"/>
    <property type="match status" value="1"/>
</dbReference>
<accession>P10630</accession>
<accession>Q61513</accession>
<accession>Q61514</accession>
<comment type="function">
    <text>ATP-dependent RNA helicase which is a subunit of the eIF4F complex involved in cap recognition and is required for mRNA binding to ribosome. In the current model of translation initiation, eIF4A unwinds RNA secondary structures in the 5'-UTR of mRNAs which is necessary to allow efficient binding of the small ribosomal subunit, and subsequent scanning for the initiator codon.</text>
</comment>
<comment type="catalytic activity">
    <reaction>
        <text>ATP + H2O = ADP + phosphate + H(+)</text>
        <dbReference type="Rhea" id="RHEA:13065"/>
        <dbReference type="ChEBI" id="CHEBI:15377"/>
        <dbReference type="ChEBI" id="CHEBI:15378"/>
        <dbReference type="ChEBI" id="CHEBI:30616"/>
        <dbReference type="ChEBI" id="CHEBI:43474"/>
        <dbReference type="ChEBI" id="CHEBI:456216"/>
        <dbReference type="EC" id="3.6.4.13"/>
    </reaction>
</comment>
<comment type="subunit">
    <text evidence="1">eIF4F is a multi-subunit complex, the composition of which varies with external and internal environmental conditions. It is composed of at least EIF4A, EIF4E and EIF4G1/EIFFG3. Interacts with EIF4E. May interact with NOM1 (By similarity).</text>
</comment>
<comment type="alternative products">
    <event type="alternative splicing"/>
    <isoform>
        <id>P10630-1</id>
        <name>1</name>
        <sequence type="displayed"/>
    </isoform>
    <isoform>
        <id>P10630-2</id>
        <name>2</name>
        <sequence type="described" ref="VSP_009630"/>
    </isoform>
</comment>
<comment type="similarity">
    <text evidence="6">Belongs to the DEAD box helicase family. eIF4A subfamily.</text>
</comment>
<keyword id="KW-0025">Alternative splicing</keyword>
<keyword id="KW-0067">ATP-binding</keyword>
<keyword id="KW-0347">Helicase</keyword>
<keyword id="KW-0378">Hydrolase</keyword>
<keyword id="KW-0396">Initiation factor</keyword>
<keyword id="KW-0547">Nucleotide-binding</keyword>
<keyword id="KW-0597">Phosphoprotein</keyword>
<keyword id="KW-0648">Protein biosynthesis</keyword>
<keyword id="KW-1185">Reference proteome</keyword>
<keyword id="KW-0694">RNA-binding</keyword>
<proteinExistence type="evidence at protein level"/>
<sequence length="407" mass="46402">MSGGSADYNREHGGPEGMDPDGVIESNWNEIVDNFDDMNLKESLLRGIYAYGFEKPSAIQQRAIIPCIKGYDVIAQAQSGTGKTATFAISILQQLEIEFKETQALVLAPTRELAQQIQKVILALGDYMGATCHACIGGTNVRNEMQKLQAEAPHIVVGTPGRVFDMLNRRYLSPKWIKMFVLDEADEMLSRGFKDQIYEIFQKLNTSIQVVLLSATMPTDVLEVTKKFMRDPIRILVKKEELTLEGIKQFYINVEREEWKLDTLCDLYETLTITQAVIFLNTRRKVDWLTEKMHARDFTVSALHGDMDQKERDVIMREFRSGSSRVLITTDLLARGIDVQQVSLVINYDLPTNRENYIHRIGRGGRFGRKGVAINFVTEEDKRILRDIETFYNTTVEEMPMNVADLI</sequence>